<reference key="1">
    <citation type="submission" date="2007-03" db="EMBL/GenBank/DDBJ databases">
        <title>Complete sequence of Desulfotomaculum reducens MI-1.</title>
        <authorList>
            <consortium name="US DOE Joint Genome Institute"/>
            <person name="Copeland A."/>
            <person name="Lucas S."/>
            <person name="Lapidus A."/>
            <person name="Barry K."/>
            <person name="Detter J.C."/>
            <person name="Glavina del Rio T."/>
            <person name="Hammon N."/>
            <person name="Israni S."/>
            <person name="Dalin E."/>
            <person name="Tice H."/>
            <person name="Pitluck S."/>
            <person name="Sims D."/>
            <person name="Brettin T."/>
            <person name="Bruce D."/>
            <person name="Han C."/>
            <person name="Tapia R."/>
            <person name="Schmutz J."/>
            <person name="Larimer F."/>
            <person name="Land M."/>
            <person name="Hauser L."/>
            <person name="Kyrpides N."/>
            <person name="Kim E."/>
            <person name="Tebo B.M."/>
            <person name="Richardson P."/>
        </authorList>
    </citation>
    <scope>NUCLEOTIDE SEQUENCE [LARGE SCALE GENOMIC DNA]</scope>
    <source>
        <strain>ATCC BAA-1160 / DSM 100696 / MI-1</strain>
    </source>
</reference>
<gene>
    <name evidence="1" type="primary">pnp</name>
    <name type="ordered locus">Dred_1950</name>
</gene>
<feature type="chain" id="PRO_0000329624" description="Polyribonucleotide nucleotidyltransferase">
    <location>
        <begin position="1"/>
        <end position="740"/>
    </location>
</feature>
<feature type="domain" description="KH" evidence="1">
    <location>
        <begin position="563"/>
        <end position="622"/>
    </location>
</feature>
<feature type="domain" description="S1 motif" evidence="1">
    <location>
        <begin position="632"/>
        <end position="706"/>
    </location>
</feature>
<feature type="region of interest" description="Disordered" evidence="2">
    <location>
        <begin position="707"/>
        <end position="740"/>
    </location>
</feature>
<feature type="compositionally biased region" description="Basic and acidic residues" evidence="2">
    <location>
        <begin position="723"/>
        <end position="740"/>
    </location>
</feature>
<feature type="binding site" evidence="1">
    <location>
        <position position="496"/>
    </location>
    <ligand>
        <name>Mg(2+)</name>
        <dbReference type="ChEBI" id="CHEBI:18420"/>
    </ligand>
</feature>
<feature type="binding site" evidence="1">
    <location>
        <position position="502"/>
    </location>
    <ligand>
        <name>Mg(2+)</name>
        <dbReference type="ChEBI" id="CHEBI:18420"/>
    </ligand>
</feature>
<organism>
    <name type="scientific">Desulforamulus reducens (strain ATCC BAA-1160 / DSM 100696 / MI-1)</name>
    <name type="common">Desulfotomaculum reducens</name>
    <dbReference type="NCBI Taxonomy" id="349161"/>
    <lineage>
        <taxon>Bacteria</taxon>
        <taxon>Bacillati</taxon>
        <taxon>Bacillota</taxon>
        <taxon>Clostridia</taxon>
        <taxon>Eubacteriales</taxon>
        <taxon>Peptococcaceae</taxon>
        <taxon>Desulforamulus</taxon>
    </lineage>
</organism>
<sequence length="740" mass="81425">MSENQVLIREISLGGRTLTLETGRMAKQASGAVLVTYGETVVLVTATVAKNTRDIDFFPLTVDYEERLYAVGKIPGGFIKREGRPSEKAILSGRLIDRPIRPLFPKHMRNEVQVVATVMSVDQDNAPEIAAMIGASAALHISKIPLKKPIGGVIVGRVDGQFVINPMVRQAENSDMHLVVAGTDDAVMMVEAGAKEVPESEMLEGIMYGHEKVKEIVKFIEDFRTEALGMGLAFEKMEIPEPQFDSNMSEAILTIAEEAIREAVLHCSREKLTKKQREVYMDEVMSGLQEKFLEQFPENPKEVTMLIEKAEKKVVRRIITHDKLRIDGRAIDEIRPISVEVGVLPRTHGTGLFTRGQTQILSVATLGSISEEQILDGLGVEESKRYMHHYNFPPFSTGETKPMRSPGRREIGHGALAERALEPMIPPEEVFPYTIRVVSEAIESNGSTSMGSVCGSTLSLMDAGVPLKAPVAGVAMGLIMEEDQFTVLTDIQGLEDHLGDMDFKVAGSANGVTALQMDIKIPGITREVFEQALEQAHRGRMFILGKMLEVLSTPRAEISVHAPAIIRTSIHPDKIRDIIGPGGKIIKKLVEETGADIDIEDDGRVFIAAVDREKGKRALEIIQSITAEVQVGKLYNGKVTRVTDFGCFVEVIPGVMGLPGKEGLVHISQLAFQRVEKTEDIVKEGEVIAVKAIGYDQQGRLKLSKKEAMRDMGLAPAESTSEQPEKRERRPFSRPKATKE</sequence>
<protein>
    <recommendedName>
        <fullName evidence="1">Polyribonucleotide nucleotidyltransferase</fullName>
        <ecNumber evidence="1">2.7.7.8</ecNumber>
    </recommendedName>
    <alternativeName>
        <fullName evidence="1">Polynucleotide phosphorylase</fullName>
        <shortName evidence="1">PNPase</shortName>
    </alternativeName>
</protein>
<accession>A4J5W6</accession>
<keyword id="KW-0963">Cytoplasm</keyword>
<keyword id="KW-0460">Magnesium</keyword>
<keyword id="KW-0479">Metal-binding</keyword>
<keyword id="KW-0548">Nucleotidyltransferase</keyword>
<keyword id="KW-1185">Reference proteome</keyword>
<keyword id="KW-0694">RNA-binding</keyword>
<keyword id="KW-0808">Transferase</keyword>
<name>PNP_DESRM</name>
<proteinExistence type="inferred from homology"/>
<evidence type="ECO:0000255" key="1">
    <source>
        <dbReference type="HAMAP-Rule" id="MF_01595"/>
    </source>
</evidence>
<evidence type="ECO:0000256" key="2">
    <source>
        <dbReference type="SAM" id="MobiDB-lite"/>
    </source>
</evidence>
<dbReference type="EC" id="2.7.7.8" evidence="1"/>
<dbReference type="EMBL" id="CP000612">
    <property type="protein sequence ID" value="ABO50469.1"/>
    <property type="molecule type" value="Genomic_DNA"/>
</dbReference>
<dbReference type="RefSeq" id="WP_011878279.1">
    <property type="nucleotide sequence ID" value="NC_009253.1"/>
</dbReference>
<dbReference type="SMR" id="A4J5W6"/>
<dbReference type="STRING" id="349161.Dred_1950"/>
<dbReference type="KEGG" id="drm:Dred_1950"/>
<dbReference type="eggNOG" id="COG1185">
    <property type="taxonomic scope" value="Bacteria"/>
</dbReference>
<dbReference type="HOGENOM" id="CLU_004217_2_2_9"/>
<dbReference type="OrthoDB" id="9804305at2"/>
<dbReference type="Proteomes" id="UP000001556">
    <property type="component" value="Chromosome"/>
</dbReference>
<dbReference type="GO" id="GO:0005829">
    <property type="term" value="C:cytosol"/>
    <property type="evidence" value="ECO:0007669"/>
    <property type="project" value="TreeGrafter"/>
</dbReference>
<dbReference type="GO" id="GO:0000175">
    <property type="term" value="F:3'-5'-RNA exonuclease activity"/>
    <property type="evidence" value="ECO:0007669"/>
    <property type="project" value="TreeGrafter"/>
</dbReference>
<dbReference type="GO" id="GO:0000287">
    <property type="term" value="F:magnesium ion binding"/>
    <property type="evidence" value="ECO:0007669"/>
    <property type="project" value="UniProtKB-UniRule"/>
</dbReference>
<dbReference type="GO" id="GO:0004654">
    <property type="term" value="F:polyribonucleotide nucleotidyltransferase activity"/>
    <property type="evidence" value="ECO:0007669"/>
    <property type="project" value="UniProtKB-UniRule"/>
</dbReference>
<dbReference type="GO" id="GO:0003723">
    <property type="term" value="F:RNA binding"/>
    <property type="evidence" value="ECO:0007669"/>
    <property type="project" value="UniProtKB-UniRule"/>
</dbReference>
<dbReference type="GO" id="GO:0006402">
    <property type="term" value="P:mRNA catabolic process"/>
    <property type="evidence" value="ECO:0007669"/>
    <property type="project" value="UniProtKB-UniRule"/>
</dbReference>
<dbReference type="GO" id="GO:0006396">
    <property type="term" value="P:RNA processing"/>
    <property type="evidence" value="ECO:0007669"/>
    <property type="project" value="InterPro"/>
</dbReference>
<dbReference type="CDD" id="cd02393">
    <property type="entry name" value="KH-I_PNPase"/>
    <property type="match status" value="1"/>
</dbReference>
<dbReference type="CDD" id="cd11363">
    <property type="entry name" value="RNase_PH_PNPase_1"/>
    <property type="match status" value="1"/>
</dbReference>
<dbReference type="CDD" id="cd11364">
    <property type="entry name" value="RNase_PH_PNPase_2"/>
    <property type="match status" value="1"/>
</dbReference>
<dbReference type="CDD" id="cd04472">
    <property type="entry name" value="S1_PNPase"/>
    <property type="match status" value="1"/>
</dbReference>
<dbReference type="FunFam" id="3.30.1370.10:FF:000001">
    <property type="entry name" value="Polyribonucleotide nucleotidyltransferase"/>
    <property type="match status" value="1"/>
</dbReference>
<dbReference type="FunFam" id="3.30.230.70:FF:000001">
    <property type="entry name" value="Polyribonucleotide nucleotidyltransferase"/>
    <property type="match status" value="1"/>
</dbReference>
<dbReference type="FunFam" id="3.30.230.70:FF:000002">
    <property type="entry name" value="Polyribonucleotide nucleotidyltransferase"/>
    <property type="match status" value="1"/>
</dbReference>
<dbReference type="Gene3D" id="3.30.230.70">
    <property type="entry name" value="GHMP Kinase, N-terminal domain"/>
    <property type="match status" value="2"/>
</dbReference>
<dbReference type="Gene3D" id="3.30.1370.10">
    <property type="entry name" value="K Homology domain, type 1"/>
    <property type="match status" value="1"/>
</dbReference>
<dbReference type="Gene3D" id="2.40.50.140">
    <property type="entry name" value="Nucleic acid-binding proteins"/>
    <property type="match status" value="1"/>
</dbReference>
<dbReference type="HAMAP" id="MF_01595">
    <property type="entry name" value="PNPase"/>
    <property type="match status" value="1"/>
</dbReference>
<dbReference type="InterPro" id="IPR001247">
    <property type="entry name" value="ExoRNase_PH_dom1"/>
</dbReference>
<dbReference type="InterPro" id="IPR015847">
    <property type="entry name" value="ExoRNase_PH_dom2"/>
</dbReference>
<dbReference type="InterPro" id="IPR036345">
    <property type="entry name" value="ExoRNase_PH_dom2_sf"/>
</dbReference>
<dbReference type="InterPro" id="IPR004087">
    <property type="entry name" value="KH_dom"/>
</dbReference>
<dbReference type="InterPro" id="IPR004088">
    <property type="entry name" value="KH_dom_type_1"/>
</dbReference>
<dbReference type="InterPro" id="IPR036612">
    <property type="entry name" value="KH_dom_type_1_sf"/>
</dbReference>
<dbReference type="InterPro" id="IPR012340">
    <property type="entry name" value="NA-bd_OB-fold"/>
</dbReference>
<dbReference type="InterPro" id="IPR012162">
    <property type="entry name" value="PNPase"/>
</dbReference>
<dbReference type="InterPro" id="IPR027408">
    <property type="entry name" value="PNPase/RNase_PH_dom_sf"/>
</dbReference>
<dbReference type="InterPro" id="IPR015848">
    <property type="entry name" value="PNPase_PH_RNA-bd_bac/org-type"/>
</dbReference>
<dbReference type="InterPro" id="IPR036456">
    <property type="entry name" value="PNPase_PH_RNA-bd_sf"/>
</dbReference>
<dbReference type="InterPro" id="IPR020568">
    <property type="entry name" value="Ribosomal_Su5_D2-typ_SF"/>
</dbReference>
<dbReference type="InterPro" id="IPR003029">
    <property type="entry name" value="S1_domain"/>
</dbReference>
<dbReference type="NCBIfam" id="TIGR03591">
    <property type="entry name" value="polynuc_phos"/>
    <property type="match status" value="1"/>
</dbReference>
<dbReference type="NCBIfam" id="NF008805">
    <property type="entry name" value="PRK11824.1"/>
    <property type="match status" value="1"/>
</dbReference>
<dbReference type="PANTHER" id="PTHR11252">
    <property type="entry name" value="POLYRIBONUCLEOTIDE NUCLEOTIDYLTRANSFERASE"/>
    <property type="match status" value="1"/>
</dbReference>
<dbReference type="PANTHER" id="PTHR11252:SF0">
    <property type="entry name" value="POLYRIBONUCLEOTIDE NUCLEOTIDYLTRANSFERASE 1, MITOCHONDRIAL"/>
    <property type="match status" value="1"/>
</dbReference>
<dbReference type="Pfam" id="PF00013">
    <property type="entry name" value="KH_1"/>
    <property type="match status" value="1"/>
</dbReference>
<dbReference type="Pfam" id="PF03726">
    <property type="entry name" value="PNPase"/>
    <property type="match status" value="1"/>
</dbReference>
<dbReference type="Pfam" id="PF01138">
    <property type="entry name" value="RNase_PH"/>
    <property type="match status" value="2"/>
</dbReference>
<dbReference type="Pfam" id="PF03725">
    <property type="entry name" value="RNase_PH_C"/>
    <property type="match status" value="2"/>
</dbReference>
<dbReference type="Pfam" id="PF00575">
    <property type="entry name" value="S1"/>
    <property type="match status" value="1"/>
</dbReference>
<dbReference type="PIRSF" id="PIRSF005499">
    <property type="entry name" value="PNPase"/>
    <property type="match status" value="1"/>
</dbReference>
<dbReference type="SMART" id="SM00322">
    <property type="entry name" value="KH"/>
    <property type="match status" value="1"/>
</dbReference>
<dbReference type="SMART" id="SM00316">
    <property type="entry name" value="S1"/>
    <property type="match status" value="1"/>
</dbReference>
<dbReference type="SUPFAM" id="SSF54791">
    <property type="entry name" value="Eukaryotic type KH-domain (KH-domain type I)"/>
    <property type="match status" value="1"/>
</dbReference>
<dbReference type="SUPFAM" id="SSF50249">
    <property type="entry name" value="Nucleic acid-binding proteins"/>
    <property type="match status" value="1"/>
</dbReference>
<dbReference type="SUPFAM" id="SSF46915">
    <property type="entry name" value="Polynucleotide phosphorylase/guanosine pentaphosphate synthase (PNPase/GPSI), domain 3"/>
    <property type="match status" value="1"/>
</dbReference>
<dbReference type="SUPFAM" id="SSF55666">
    <property type="entry name" value="Ribonuclease PH domain 2-like"/>
    <property type="match status" value="2"/>
</dbReference>
<dbReference type="SUPFAM" id="SSF54211">
    <property type="entry name" value="Ribosomal protein S5 domain 2-like"/>
    <property type="match status" value="2"/>
</dbReference>
<dbReference type="PROSITE" id="PS50084">
    <property type="entry name" value="KH_TYPE_1"/>
    <property type="match status" value="1"/>
</dbReference>
<dbReference type="PROSITE" id="PS50126">
    <property type="entry name" value="S1"/>
    <property type="match status" value="1"/>
</dbReference>
<comment type="function">
    <text evidence="1">Involved in mRNA degradation. Catalyzes the phosphorolysis of single-stranded polyribonucleotides processively in the 3'- to 5'-direction.</text>
</comment>
<comment type="catalytic activity">
    <reaction evidence="1">
        <text>RNA(n+1) + phosphate = RNA(n) + a ribonucleoside 5'-diphosphate</text>
        <dbReference type="Rhea" id="RHEA:22096"/>
        <dbReference type="Rhea" id="RHEA-COMP:14527"/>
        <dbReference type="Rhea" id="RHEA-COMP:17342"/>
        <dbReference type="ChEBI" id="CHEBI:43474"/>
        <dbReference type="ChEBI" id="CHEBI:57930"/>
        <dbReference type="ChEBI" id="CHEBI:140395"/>
        <dbReference type="EC" id="2.7.7.8"/>
    </reaction>
</comment>
<comment type="cofactor">
    <cofactor evidence="1">
        <name>Mg(2+)</name>
        <dbReference type="ChEBI" id="CHEBI:18420"/>
    </cofactor>
</comment>
<comment type="subcellular location">
    <subcellularLocation>
        <location evidence="1">Cytoplasm</location>
    </subcellularLocation>
</comment>
<comment type="similarity">
    <text evidence="1">Belongs to the polyribonucleotide nucleotidyltransferase family.</text>
</comment>